<proteinExistence type="inferred from homology"/>
<name>Y1313_METMA</name>
<dbReference type="EMBL" id="AE008384">
    <property type="protein sequence ID" value="AAM31009.1"/>
    <property type="molecule type" value="Genomic_DNA"/>
</dbReference>
<dbReference type="SMR" id="Q8PXA9"/>
<dbReference type="KEGG" id="mma:MM_1313"/>
<dbReference type="PATRIC" id="fig|192952.21.peg.1525"/>
<dbReference type="eggNOG" id="arCOG01045">
    <property type="taxonomic scope" value="Archaea"/>
</dbReference>
<dbReference type="HOGENOM" id="CLU_096329_0_0_2"/>
<dbReference type="Proteomes" id="UP000000595">
    <property type="component" value="Chromosome"/>
</dbReference>
<dbReference type="GO" id="GO:0005524">
    <property type="term" value="F:ATP binding"/>
    <property type="evidence" value="ECO:0007669"/>
    <property type="project" value="UniProtKB-UniRule"/>
</dbReference>
<dbReference type="Gene3D" id="3.40.50.300">
    <property type="entry name" value="P-loop containing nucleotide triphosphate hydrolases"/>
    <property type="match status" value="1"/>
</dbReference>
<dbReference type="HAMAP" id="MF_01111">
    <property type="entry name" value="UPF0200"/>
    <property type="match status" value="1"/>
</dbReference>
<dbReference type="InterPro" id="IPR022970">
    <property type="entry name" value="NTP_hydrolase-rel"/>
</dbReference>
<dbReference type="InterPro" id="IPR027417">
    <property type="entry name" value="P-loop_NTPase"/>
</dbReference>
<dbReference type="PANTHER" id="PTHR41930:SF1">
    <property type="entry name" value="DEPHOSPHO-COA KINASE"/>
    <property type="match status" value="1"/>
</dbReference>
<dbReference type="PANTHER" id="PTHR41930">
    <property type="entry name" value="UPF0200 PROTEIN MJ1399"/>
    <property type="match status" value="1"/>
</dbReference>
<dbReference type="Pfam" id="PF13207">
    <property type="entry name" value="AAA_17"/>
    <property type="match status" value="1"/>
</dbReference>
<dbReference type="SUPFAM" id="SSF52540">
    <property type="entry name" value="P-loop containing nucleoside triphosphate hydrolases"/>
    <property type="match status" value="1"/>
</dbReference>
<evidence type="ECO:0000255" key="1">
    <source>
        <dbReference type="HAMAP-Rule" id="MF_01111"/>
    </source>
</evidence>
<organism>
    <name type="scientific">Methanosarcina mazei (strain ATCC BAA-159 / DSM 3647 / Goe1 / Go1 / JCM 11833 / OCM 88)</name>
    <name type="common">Methanosarcina frisia</name>
    <dbReference type="NCBI Taxonomy" id="192952"/>
    <lineage>
        <taxon>Archaea</taxon>
        <taxon>Methanobacteriati</taxon>
        <taxon>Methanobacteriota</taxon>
        <taxon>Stenosarchaea group</taxon>
        <taxon>Methanomicrobia</taxon>
        <taxon>Methanosarcinales</taxon>
        <taxon>Methanosarcinaceae</taxon>
        <taxon>Methanosarcina</taxon>
    </lineage>
</organism>
<keyword id="KW-0067">ATP-binding</keyword>
<keyword id="KW-0547">Nucleotide-binding</keyword>
<sequence>MMKIIAFVGMPASGKSEASRIAAEMGIPVIIMGDVIRKEVLKRGLEPNDSNTGMVATDLRKHEGMGAVARRCISQIRETGSELVVVDGVRGIAEVECFRKEFGKGFILISIYAPIEVRFSRVQKRGRSDDMNSIEGLRHRDERELSWGMGEAIDASNVEIENNFTLETFRKDVRDVLSNYLEADLEK</sequence>
<comment type="similarity">
    <text evidence="1">Belongs to the UPF0200 family.</text>
</comment>
<accession>Q8PXA9</accession>
<protein>
    <recommendedName>
        <fullName evidence="1">UPF0200 protein MM_1313</fullName>
    </recommendedName>
</protein>
<reference key="1">
    <citation type="journal article" date="2002" name="J. Mol. Microbiol. Biotechnol.">
        <title>The genome of Methanosarcina mazei: evidence for lateral gene transfer between Bacteria and Archaea.</title>
        <authorList>
            <person name="Deppenmeier U."/>
            <person name="Johann A."/>
            <person name="Hartsch T."/>
            <person name="Merkl R."/>
            <person name="Schmitz R.A."/>
            <person name="Martinez-Arias R."/>
            <person name="Henne A."/>
            <person name="Wiezer A."/>
            <person name="Baeumer S."/>
            <person name="Jacobi C."/>
            <person name="Brueggemann H."/>
            <person name="Lienard T."/>
            <person name="Christmann A."/>
            <person name="Boemecke M."/>
            <person name="Steckel S."/>
            <person name="Bhattacharyya A."/>
            <person name="Lykidis A."/>
            <person name="Overbeek R."/>
            <person name="Klenk H.-P."/>
            <person name="Gunsalus R.P."/>
            <person name="Fritz H.-J."/>
            <person name="Gottschalk G."/>
        </authorList>
    </citation>
    <scope>NUCLEOTIDE SEQUENCE [LARGE SCALE GENOMIC DNA]</scope>
    <source>
        <strain>ATCC BAA-159 / DSM 3647 / Goe1 / Go1 / JCM 11833 / OCM 88</strain>
    </source>
</reference>
<gene>
    <name type="ordered locus">MM_1313</name>
</gene>
<feature type="chain" id="PRO_0000094527" description="UPF0200 protein MM_1313">
    <location>
        <begin position="1"/>
        <end position="187"/>
    </location>
</feature>
<feature type="binding site" evidence="1">
    <location>
        <begin position="9"/>
        <end position="16"/>
    </location>
    <ligand>
        <name>ATP</name>
        <dbReference type="ChEBI" id="CHEBI:30616"/>
    </ligand>
</feature>